<accession>B8ZPP6</accession>
<keyword id="KW-0030">Aminoacyl-tRNA synthetase</keyword>
<keyword id="KW-0067">ATP-binding</keyword>
<keyword id="KW-0963">Cytoplasm</keyword>
<keyword id="KW-0436">Ligase</keyword>
<keyword id="KW-0547">Nucleotide-binding</keyword>
<keyword id="KW-0648">Protein biosynthesis</keyword>
<name>SYH_STRPJ</name>
<comment type="catalytic activity">
    <reaction evidence="1">
        <text>tRNA(His) + L-histidine + ATP = L-histidyl-tRNA(His) + AMP + diphosphate + H(+)</text>
        <dbReference type="Rhea" id="RHEA:17313"/>
        <dbReference type="Rhea" id="RHEA-COMP:9665"/>
        <dbReference type="Rhea" id="RHEA-COMP:9689"/>
        <dbReference type="ChEBI" id="CHEBI:15378"/>
        <dbReference type="ChEBI" id="CHEBI:30616"/>
        <dbReference type="ChEBI" id="CHEBI:33019"/>
        <dbReference type="ChEBI" id="CHEBI:57595"/>
        <dbReference type="ChEBI" id="CHEBI:78442"/>
        <dbReference type="ChEBI" id="CHEBI:78527"/>
        <dbReference type="ChEBI" id="CHEBI:456215"/>
        <dbReference type="EC" id="6.1.1.21"/>
    </reaction>
</comment>
<comment type="subunit">
    <text evidence="1">Homodimer.</text>
</comment>
<comment type="subcellular location">
    <subcellularLocation>
        <location evidence="1">Cytoplasm</location>
    </subcellularLocation>
</comment>
<comment type="similarity">
    <text evidence="1">Belongs to the class-II aminoacyl-tRNA synthetase family.</text>
</comment>
<protein>
    <recommendedName>
        <fullName evidence="1">Histidine--tRNA ligase</fullName>
        <ecNumber evidence="1">6.1.1.21</ecNumber>
    </recommendedName>
    <alternativeName>
        <fullName evidence="1">Histidyl-tRNA synthetase</fullName>
        <shortName evidence="1">HisRS</shortName>
    </alternativeName>
</protein>
<reference key="1">
    <citation type="journal article" date="2009" name="J. Bacteriol.">
        <title>Role of conjugative elements in the evolution of the multidrug-resistant pandemic clone Streptococcus pneumoniae Spain23F ST81.</title>
        <authorList>
            <person name="Croucher N.J."/>
            <person name="Walker D."/>
            <person name="Romero P."/>
            <person name="Lennard N."/>
            <person name="Paterson G.K."/>
            <person name="Bason N.C."/>
            <person name="Mitchell A.M."/>
            <person name="Quail M.A."/>
            <person name="Andrew P.W."/>
            <person name="Parkhill J."/>
            <person name="Bentley S.D."/>
            <person name="Mitchell T.J."/>
        </authorList>
    </citation>
    <scope>NUCLEOTIDE SEQUENCE [LARGE SCALE GENOMIC DNA]</scope>
    <source>
        <strain>ATCC 700669 / Spain 23F-1</strain>
    </source>
</reference>
<dbReference type="EC" id="6.1.1.21" evidence="1"/>
<dbReference type="EMBL" id="FM211187">
    <property type="protein sequence ID" value="CAR69887.1"/>
    <property type="molecule type" value="Genomic_DNA"/>
</dbReference>
<dbReference type="RefSeq" id="WP_000775873.1">
    <property type="nucleotide sequence ID" value="NC_011900.1"/>
</dbReference>
<dbReference type="SMR" id="B8ZPP6"/>
<dbReference type="KEGG" id="sne:SPN23F21500"/>
<dbReference type="HOGENOM" id="CLU_025113_1_1_9"/>
<dbReference type="GO" id="GO:0005737">
    <property type="term" value="C:cytoplasm"/>
    <property type="evidence" value="ECO:0007669"/>
    <property type="project" value="UniProtKB-SubCell"/>
</dbReference>
<dbReference type="GO" id="GO:0005524">
    <property type="term" value="F:ATP binding"/>
    <property type="evidence" value="ECO:0007669"/>
    <property type="project" value="UniProtKB-UniRule"/>
</dbReference>
<dbReference type="GO" id="GO:0140096">
    <property type="term" value="F:catalytic activity, acting on a protein"/>
    <property type="evidence" value="ECO:0007669"/>
    <property type="project" value="UniProtKB-ARBA"/>
</dbReference>
<dbReference type="GO" id="GO:0004821">
    <property type="term" value="F:histidine-tRNA ligase activity"/>
    <property type="evidence" value="ECO:0007669"/>
    <property type="project" value="UniProtKB-UniRule"/>
</dbReference>
<dbReference type="GO" id="GO:0016740">
    <property type="term" value="F:transferase activity"/>
    <property type="evidence" value="ECO:0007669"/>
    <property type="project" value="UniProtKB-ARBA"/>
</dbReference>
<dbReference type="GO" id="GO:0006427">
    <property type="term" value="P:histidyl-tRNA aminoacylation"/>
    <property type="evidence" value="ECO:0007669"/>
    <property type="project" value="UniProtKB-UniRule"/>
</dbReference>
<dbReference type="CDD" id="cd00773">
    <property type="entry name" value="HisRS-like_core"/>
    <property type="match status" value="1"/>
</dbReference>
<dbReference type="CDD" id="cd00859">
    <property type="entry name" value="HisRS_anticodon"/>
    <property type="match status" value="1"/>
</dbReference>
<dbReference type="FunFam" id="3.30.930.10:FF:000005">
    <property type="entry name" value="Histidine--tRNA ligase"/>
    <property type="match status" value="1"/>
</dbReference>
<dbReference type="FunFam" id="3.40.50.800:FF:000022">
    <property type="entry name" value="Histidine--tRNA ligase"/>
    <property type="match status" value="1"/>
</dbReference>
<dbReference type="Gene3D" id="3.40.50.800">
    <property type="entry name" value="Anticodon-binding domain"/>
    <property type="match status" value="1"/>
</dbReference>
<dbReference type="Gene3D" id="3.30.930.10">
    <property type="entry name" value="Bira Bifunctional Protein, Domain 2"/>
    <property type="match status" value="1"/>
</dbReference>
<dbReference type="HAMAP" id="MF_00127">
    <property type="entry name" value="His_tRNA_synth"/>
    <property type="match status" value="1"/>
</dbReference>
<dbReference type="InterPro" id="IPR006195">
    <property type="entry name" value="aa-tRNA-synth_II"/>
</dbReference>
<dbReference type="InterPro" id="IPR045864">
    <property type="entry name" value="aa-tRNA-synth_II/BPL/LPL"/>
</dbReference>
<dbReference type="InterPro" id="IPR004154">
    <property type="entry name" value="Anticodon-bd"/>
</dbReference>
<dbReference type="InterPro" id="IPR036621">
    <property type="entry name" value="Anticodon-bd_dom_sf"/>
</dbReference>
<dbReference type="InterPro" id="IPR015807">
    <property type="entry name" value="His-tRNA-ligase"/>
</dbReference>
<dbReference type="InterPro" id="IPR041715">
    <property type="entry name" value="HisRS-like_core"/>
</dbReference>
<dbReference type="InterPro" id="IPR004516">
    <property type="entry name" value="HisRS/HisZ"/>
</dbReference>
<dbReference type="InterPro" id="IPR033656">
    <property type="entry name" value="HisRS_anticodon"/>
</dbReference>
<dbReference type="NCBIfam" id="TIGR00442">
    <property type="entry name" value="hisS"/>
    <property type="match status" value="1"/>
</dbReference>
<dbReference type="PANTHER" id="PTHR43707:SF1">
    <property type="entry name" value="HISTIDINE--TRNA LIGASE, MITOCHONDRIAL-RELATED"/>
    <property type="match status" value="1"/>
</dbReference>
<dbReference type="PANTHER" id="PTHR43707">
    <property type="entry name" value="HISTIDYL-TRNA SYNTHETASE"/>
    <property type="match status" value="1"/>
</dbReference>
<dbReference type="Pfam" id="PF03129">
    <property type="entry name" value="HGTP_anticodon"/>
    <property type="match status" value="1"/>
</dbReference>
<dbReference type="Pfam" id="PF13393">
    <property type="entry name" value="tRNA-synt_His"/>
    <property type="match status" value="1"/>
</dbReference>
<dbReference type="PIRSF" id="PIRSF001549">
    <property type="entry name" value="His-tRNA_synth"/>
    <property type="match status" value="1"/>
</dbReference>
<dbReference type="SUPFAM" id="SSF52954">
    <property type="entry name" value="Class II aaRS ABD-related"/>
    <property type="match status" value="1"/>
</dbReference>
<dbReference type="SUPFAM" id="SSF55681">
    <property type="entry name" value="Class II aaRS and biotin synthetases"/>
    <property type="match status" value="1"/>
</dbReference>
<dbReference type="PROSITE" id="PS50862">
    <property type="entry name" value="AA_TRNA_LIGASE_II"/>
    <property type="match status" value="1"/>
</dbReference>
<feature type="chain" id="PRO_1000199155" description="Histidine--tRNA ligase">
    <location>
        <begin position="1"/>
        <end position="429"/>
    </location>
</feature>
<organism>
    <name type="scientific">Streptococcus pneumoniae (strain ATCC 700669 / Spain 23F-1)</name>
    <dbReference type="NCBI Taxonomy" id="561276"/>
    <lineage>
        <taxon>Bacteria</taxon>
        <taxon>Bacillati</taxon>
        <taxon>Bacillota</taxon>
        <taxon>Bacilli</taxon>
        <taxon>Lactobacillales</taxon>
        <taxon>Streptococcaceae</taxon>
        <taxon>Streptococcus</taxon>
    </lineage>
</organism>
<sequence>MKLQKPKGTQDILPAESAKWQYVEGFAREIFKRYNYAEVRTPIFEHYEVISRSVGDTTDIVTKEMYDFYDKGDRHITLRPEGTAPVVRSYVENKLFAPEVQKPSKFYYMGPMFRYERPQAGRLRQFHQIGVECFGSSNPATDVETIAMAAHFLKEIGIQGVKLHLNTLGNPESRAAYRQALIDYLTPLKETLSKDSQRRLEENPLRVLDSKEKEDKVAVENAPSILDFLDEESQTHFDAVRQMLENLGVDYIIDTNMVRGLDYYNHTIFEFITEIEGNDLTVCAGGRYDGLVAYFGGPETAGFGFGLGVERLLLILEKQGVALPIENALDVYIAVLGDGANVKALELVQALRQQGFKAERDYLNRKLKAQFKSADVFAAKTLITLGESEVESGQVTVKNNQTREEVQVSLETISQNFSEIFEKLGFYTQ</sequence>
<proteinExistence type="inferred from homology"/>
<evidence type="ECO:0000255" key="1">
    <source>
        <dbReference type="HAMAP-Rule" id="MF_00127"/>
    </source>
</evidence>
<gene>
    <name evidence="1" type="primary">hisS</name>
    <name type="ordered locus">SPN23F21500</name>
</gene>